<sequence>MSPESKKLFNIIILGVAFMFMFTAFQTCGNVAQTVIRSLNRTDFHGSGYTSMAIIYGVFSASNLITPSVVAIVGPQLSMFASGLFYSMYIAVFIQPFPWSFYTASVFIGIAAAVLWTAQGNCLTINSDEHSIGRNSGIFWALLQSSLFFGNLYIYFAWQGKTQISESDRRTVFIALTVISLVGTVLFFLIRKPDSENVLGEDESSDDQDMEVNESAQNNLTKAVDAFKKSFKLCVTKEMLLLSITTAYTGLELTFFSGVYGTCIGATNKFGAEEKSLIGLSGIFIGIGEILGGSLFGLLSKNNRFGRNPVVLLGILVHFIAFYLIFLNMPGDAPIAPVKGTDSSAYIKSSKEVAILCSFLLGLGDSCFNTQLLSILGFLYSEDSAPAFAIFKFVQSICAAVAFFYSNYLLLHWQLLVMVIFGFFGTISFFTVEWEAAAFVARGSDYRSI</sequence>
<keyword id="KW-0025">Alternative splicing</keyword>
<keyword id="KW-0325">Glycoprotein</keyword>
<keyword id="KW-0472">Membrane</keyword>
<keyword id="KW-0597">Phosphoprotein</keyword>
<keyword id="KW-1267">Proteomics identification</keyword>
<keyword id="KW-1185">Reference proteome</keyword>
<keyword id="KW-0812">Transmembrane</keyword>
<keyword id="KW-1133">Transmembrane helix</keyword>
<comment type="interaction">
    <interactant intactId="EBI-17633886">
        <id>O43934</id>
    </interactant>
    <interactant intactId="EBI-12175685">
        <id>Q14802-3</id>
        <label>FXYD3</label>
    </interactant>
    <organismsDiffer>false</organismsDiffer>
    <experiments>3</experiments>
</comment>
<comment type="interaction">
    <interactant intactId="EBI-17633886">
        <id>O43934</id>
    </interactant>
    <interactant intactId="EBI-17458373">
        <id>P48165</id>
        <label>GJA8</label>
    </interactant>
    <organismsDiffer>false</organismsDiffer>
    <experiments>3</experiments>
</comment>
<comment type="interaction">
    <interactant intactId="EBI-17633886">
        <id>O43934</id>
    </interactant>
    <interactant intactId="EBI-3908586">
        <id>O75712</id>
        <label>GJB3</label>
    </interactant>
    <organismsDiffer>false</organismsDiffer>
    <experiments>3</experiments>
</comment>
<comment type="interaction">
    <interactant intactId="EBI-17633886">
        <id>O43934</id>
    </interactant>
    <interactant intactId="EBI-19944128">
        <id>Q6UX15-2</id>
        <label>LAYN</label>
    </interactant>
    <organismsDiffer>false</organismsDiffer>
    <experiments>3</experiments>
</comment>
<comment type="interaction">
    <interactant intactId="EBI-17633886">
        <id>O43934</id>
    </interactant>
    <interactant intactId="EBI-10285708">
        <id>Q96FE7</id>
        <label>PIK3IP1</label>
    </interactant>
    <organismsDiffer>false</organismsDiffer>
    <experiments>3</experiments>
</comment>
<comment type="interaction">
    <interactant intactId="EBI-17633886">
        <id>O43934</id>
    </interactant>
    <interactant intactId="EBI-3919694">
        <id>P15151</id>
        <label>PVR</label>
    </interactant>
    <organismsDiffer>false</organismsDiffer>
    <experiments>3</experiments>
</comment>
<comment type="subcellular location">
    <subcellularLocation>
        <location evidence="6">Membrane</location>
        <topology evidence="6">Multi-pass membrane protein</topology>
    </subcellularLocation>
</comment>
<comment type="alternative products">
    <event type="alternative splicing"/>
    <isoform>
        <id>O43934-1</id>
        <name>1</name>
        <sequence type="displayed"/>
    </isoform>
    <isoform>
        <id>O43934-2</id>
        <name>2</name>
        <sequence type="described" ref="VSP_028187"/>
    </isoform>
</comment>
<comment type="similarity">
    <text evidence="6">Belongs to the unc-93 family.</text>
</comment>
<comment type="caution">
    <text evidence="6">Despite its name, it is related to the unc-93 family and not to the major facilitator superfamily.</text>
</comment>
<feature type="chain" id="PRO_0000305019" description="UNC93-like protein MFSD11">
    <location>
        <begin position="1"/>
        <end position="449"/>
    </location>
</feature>
<feature type="transmembrane region" description="Helical" evidence="2">
    <location>
        <begin position="8"/>
        <end position="28"/>
    </location>
</feature>
<feature type="transmembrane region" description="Helical" evidence="2">
    <location>
        <begin position="53"/>
        <end position="73"/>
    </location>
</feature>
<feature type="transmembrane region" description="Helical" evidence="2">
    <location>
        <begin position="74"/>
        <end position="94"/>
    </location>
</feature>
<feature type="transmembrane region" description="Helical" evidence="2">
    <location>
        <begin position="96"/>
        <end position="116"/>
    </location>
</feature>
<feature type="transmembrane region" description="Helical" evidence="2">
    <location>
        <begin position="138"/>
        <end position="158"/>
    </location>
</feature>
<feature type="transmembrane region" description="Helical" evidence="2">
    <location>
        <begin position="170"/>
        <end position="190"/>
    </location>
</feature>
<feature type="transmembrane region" description="Helical" evidence="2">
    <location>
        <begin position="239"/>
        <end position="259"/>
    </location>
</feature>
<feature type="transmembrane region" description="Helical" evidence="2">
    <location>
        <begin position="277"/>
        <end position="297"/>
    </location>
</feature>
<feature type="transmembrane region" description="Helical" evidence="2">
    <location>
        <begin position="309"/>
        <end position="329"/>
    </location>
</feature>
<feature type="transmembrane region" description="Helical" evidence="2">
    <location>
        <begin position="359"/>
        <end position="379"/>
    </location>
</feature>
<feature type="transmembrane region" description="Helical" evidence="2">
    <location>
        <begin position="385"/>
        <end position="405"/>
    </location>
</feature>
<feature type="transmembrane region" description="Helical" evidence="2">
    <location>
        <begin position="410"/>
        <end position="430"/>
    </location>
</feature>
<feature type="modified residue" description="Phosphoserine" evidence="1">
    <location>
        <position position="204"/>
    </location>
</feature>
<feature type="glycosylation site" description="N-linked (GlcNAc...) asparagine" evidence="2">
    <location>
        <position position="40"/>
    </location>
</feature>
<feature type="splice variant" id="VSP_028187" description="In isoform 2." evidence="5">
    <location>
        <begin position="114"/>
        <end position="165"/>
    </location>
</feature>
<feature type="sequence variant" id="VAR_084653" description="Found in a patient with intellectual disability; uncertain significance." evidence="3">
    <original>G</original>
    <variation>A</variation>
    <location>
        <position position="48"/>
    </location>
</feature>
<feature type="sequence variant" id="VAR_035151" description="In dbSNP:rs3198672." evidence="4">
    <original>S</original>
    <variation>F</variation>
    <location>
        <position position="428"/>
    </location>
</feature>
<evidence type="ECO:0000250" key="1">
    <source>
        <dbReference type="UniProtKB" id="Q8BJ51"/>
    </source>
</evidence>
<evidence type="ECO:0000255" key="2"/>
<evidence type="ECO:0000269" key="3">
    <source>
    </source>
</evidence>
<evidence type="ECO:0000269" key="4">
    <source>
    </source>
</evidence>
<evidence type="ECO:0000303" key="5">
    <source>
    </source>
</evidence>
<evidence type="ECO:0000305" key="6"/>
<proteinExistence type="evidence at protein level"/>
<name>MFS11_HUMAN</name>
<reference key="1">
    <citation type="journal article" date="1997" name="Nucleic Acids Res.">
        <title>Characterization of multiple alternative RNAs resulting from antisense transcription of the PR264/SC35 splicing factor gene.</title>
        <authorList>
            <person name="Sureau A."/>
            <person name="Soret J."/>
            <person name="Guyon C."/>
            <person name="Gaillard C."/>
            <person name="Dumon S."/>
            <person name="Keller M."/>
            <person name="Crisanti P."/>
            <person name="Perbal B."/>
        </authorList>
    </citation>
    <scope>NUCLEOTIDE SEQUENCE [MRNA] (ISOFORMS 1 AND 2)</scope>
    <scope>VARIANT PHE-428</scope>
</reference>
<reference key="2">
    <citation type="journal article" date="2004" name="Nat. Genet.">
        <title>Complete sequencing and characterization of 21,243 full-length human cDNAs.</title>
        <authorList>
            <person name="Ota T."/>
            <person name="Suzuki Y."/>
            <person name="Nishikawa T."/>
            <person name="Otsuki T."/>
            <person name="Sugiyama T."/>
            <person name="Irie R."/>
            <person name="Wakamatsu A."/>
            <person name="Hayashi K."/>
            <person name="Sato H."/>
            <person name="Nagai K."/>
            <person name="Kimura K."/>
            <person name="Makita H."/>
            <person name="Sekine M."/>
            <person name="Obayashi M."/>
            <person name="Nishi T."/>
            <person name="Shibahara T."/>
            <person name="Tanaka T."/>
            <person name="Ishii S."/>
            <person name="Yamamoto J."/>
            <person name="Saito K."/>
            <person name="Kawai Y."/>
            <person name="Isono Y."/>
            <person name="Nakamura Y."/>
            <person name="Nagahari K."/>
            <person name="Murakami K."/>
            <person name="Yasuda T."/>
            <person name="Iwayanagi T."/>
            <person name="Wagatsuma M."/>
            <person name="Shiratori A."/>
            <person name="Sudo H."/>
            <person name="Hosoiri T."/>
            <person name="Kaku Y."/>
            <person name="Kodaira H."/>
            <person name="Kondo H."/>
            <person name="Sugawara M."/>
            <person name="Takahashi M."/>
            <person name="Kanda K."/>
            <person name="Yokoi T."/>
            <person name="Furuya T."/>
            <person name="Kikkawa E."/>
            <person name="Omura Y."/>
            <person name="Abe K."/>
            <person name="Kamihara K."/>
            <person name="Katsuta N."/>
            <person name="Sato K."/>
            <person name="Tanikawa M."/>
            <person name="Yamazaki M."/>
            <person name="Ninomiya K."/>
            <person name="Ishibashi T."/>
            <person name="Yamashita H."/>
            <person name="Murakawa K."/>
            <person name="Fujimori K."/>
            <person name="Tanai H."/>
            <person name="Kimata M."/>
            <person name="Watanabe M."/>
            <person name="Hiraoka S."/>
            <person name="Chiba Y."/>
            <person name="Ishida S."/>
            <person name="Ono Y."/>
            <person name="Takiguchi S."/>
            <person name="Watanabe S."/>
            <person name="Yosida M."/>
            <person name="Hotuta T."/>
            <person name="Kusano J."/>
            <person name="Kanehori K."/>
            <person name="Takahashi-Fujii A."/>
            <person name="Hara H."/>
            <person name="Tanase T.-O."/>
            <person name="Nomura Y."/>
            <person name="Togiya S."/>
            <person name="Komai F."/>
            <person name="Hara R."/>
            <person name="Takeuchi K."/>
            <person name="Arita M."/>
            <person name="Imose N."/>
            <person name="Musashino K."/>
            <person name="Yuuki H."/>
            <person name="Oshima A."/>
            <person name="Sasaki N."/>
            <person name="Aotsuka S."/>
            <person name="Yoshikawa Y."/>
            <person name="Matsunawa H."/>
            <person name="Ichihara T."/>
            <person name="Shiohata N."/>
            <person name="Sano S."/>
            <person name="Moriya S."/>
            <person name="Momiyama H."/>
            <person name="Satoh N."/>
            <person name="Takami S."/>
            <person name="Terashima Y."/>
            <person name="Suzuki O."/>
            <person name="Nakagawa S."/>
            <person name="Senoh A."/>
            <person name="Mizoguchi H."/>
            <person name="Goto Y."/>
            <person name="Shimizu F."/>
            <person name="Wakebe H."/>
            <person name="Hishigaki H."/>
            <person name="Watanabe T."/>
            <person name="Sugiyama A."/>
            <person name="Takemoto M."/>
            <person name="Kawakami B."/>
            <person name="Yamazaki M."/>
            <person name="Watanabe K."/>
            <person name="Kumagai A."/>
            <person name="Itakura S."/>
            <person name="Fukuzumi Y."/>
            <person name="Fujimori Y."/>
            <person name="Komiyama M."/>
            <person name="Tashiro H."/>
            <person name="Tanigami A."/>
            <person name="Fujiwara T."/>
            <person name="Ono T."/>
            <person name="Yamada K."/>
            <person name="Fujii Y."/>
            <person name="Ozaki K."/>
            <person name="Hirao M."/>
            <person name="Ohmori Y."/>
            <person name="Kawabata A."/>
            <person name="Hikiji T."/>
            <person name="Kobatake N."/>
            <person name="Inagaki H."/>
            <person name="Ikema Y."/>
            <person name="Okamoto S."/>
            <person name="Okitani R."/>
            <person name="Kawakami T."/>
            <person name="Noguchi S."/>
            <person name="Itoh T."/>
            <person name="Shigeta K."/>
            <person name="Senba T."/>
            <person name="Matsumura K."/>
            <person name="Nakajima Y."/>
            <person name="Mizuno T."/>
            <person name="Morinaga M."/>
            <person name="Sasaki M."/>
            <person name="Togashi T."/>
            <person name="Oyama M."/>
            <person name="Hata H."/>
            <person name="Watanabe M."/>
            <person name="Komatsu T."/>
            <person name="Mizushima-Sugano J."/>
            <person name="Satoh T."/>
            <person name="Shirai Y."/>
            <person name="Takahashi Y."/>
            <person name="Nakagawa K."/>
            <person name="Okumura K."/>
            <person name="Nagase T."/>
            <person name="Nomura N."/>
            <person name="Kikuchi H."/>
            <person name="Masuho Y."/>
            <person name="Yamashita R."/>
            <person name="Nakai K."/>
            <person name="Yada T."/>
            <person name="Nakamura Y."/>
            <person name="Ohara O."/>
            <person name="Isogai T."/>
            <person name="Sugano S."/>
        </authorList>
    </citation>
    <scope>NUCLEOTIDE SEQUENCE [LARGE SCALE MRNA] (ISOFORM 1)</scope>
    <source>
        <tissue>Colon mucosa</tissue>
    </source>
</reference>
<reference key="3">
    <citation type="submission" date="2005-07" db="EMBL/GenBank/DDBJ databases">
        <authorList>
            <person name="Mural R.J."/>
            <person name="Istrail S."/>
            <person name="Sutton G.G."/>
            <person name="Florea L."/>
            <person name="Halpern A.L."/>
            <person name="Mobarry C.M."/>
            <person name="Lippert R."/>
            <person name="Walenz B."/>
            <person name="Shatkay H."/>
            <person name="Dew I."/>
            <person name="Miller J.R."/>
            <person name="Flanigan M.J."/>
            <person name="Edwards N.J."/>
            <person name="Bolanos R."/>
            <person name="Fasulo D."/>
            <person name="Halldorsson B.V."/>
            <person name="Hannenhalli S."/>
            <person name="Turner R."/>
            <person name="Yooseph S."/>
            <person name="Lu F."/>
            <person name="Nusskern D.R."/>
            <person name="Shue B.C."/>
            <person name="Zheng X.H."/>
            <person name="Zhong F."/>
            <person name="Delcher A.L."/>
            <person name="Huson D.H."/>
            <person name="Kravitz S.A."/>
            <person name="Mouchard L."/>
            <person name="Reinert K."/>
            <person name="Remington K.A."/>
            <person name="Clark A.G."/>
            <person name="Waterman M.S."/>
            <person name="Eichler E.E."/>
            <person name="Adams M.D."/>
            <person name="Hunkapiller M.W."/>
            <person name="Myers E.W."/>
            <person name="Venter J.C."/>
        </authorList>
    </citation>
    <scope>NUCLEOTIDE SEQUENCE [LARGE SCALE GENOMIC DNA]</scope>
</reference>
<reference key="4">
    <citation type="journal article" date="2004" name="Genome Res.">
        <title>The status, quality, and expansion of the NIH full-length cDNA project: the Mammalian Gene Collection (MGC).</title>
        <authorList>
            <consortium name="The MGC Project Team"/>
        </authorList>
    </citation>
    <scope>NUCLEOTIDE SEQUENCE [LARGE SCALE MRNA] (ISOFORM 1)</scope>
    <source>
        <tissue>Brain</tissue>
        <tissue>Cervix</tissue>
    </source>
</reference>
<reference key="5">
    <citation type="journal article" date="2017" name="Hum. Genet.">
        <title>Expanding the genetic heterogeneity of intellectual disability.</title>
        <authorList>
            <person name="Anazi S."/>
            <person name="Maddirevula S."/>
            <person name="Salpietro V."/>
            <person name="Asi Y.T."/>
            <person name="Alsahli S."/>
            <person name="Alhashem A."/>
            <person name="Shamseldin H.E."/>
            <person name="AlZahrani F."/>
            <person name="Patel N."/>
            <person name="Ibrahim N."/>
            <person name="Abdulwahab F.M."/>
            <person name="Hashem M."/>
            <person name="Alhashmi N."/>
            <person name="Al Murshedi F."/>
            <person name="Al Kindy A."/>
            <person name="Alshaer A."/>
            <person name="Rumayyan A."/>
            <person name="Al Tala S."/>
            <person name="Kurdi W."/>
            <person name="Alsaman A."/>
            <person name="Alasmari A."/>
            <person name="Banu S."/>
            <person name="Sultan T."/>
            <person name="Saleh M.M."/>
            <person name="Alkuraya H."/>
            <person name="Salih M.A."/>
            <person name="Aldhalaan H."/>
            <person name="Ben-Omran T."/>
            <person name="Al Musafri F."/>
            <person name="Ali R."/>
            <person name="Suleiman J."/>
            <person name="Tabarki B."/>
            <person name="El-Hattab A.W."/>
            <person name="Bupp C."/>
            <person name="Alfadhel M."/>
            <person name="Al Tassan N."/>
            <person name="Monies D."/>
            <person name="Arold S.T."/>
            <person name="Abouelhoda M."/>
            <person name="Lashley T."/>
            <person name="Houlden H."/>
            <person name="Faqeih E."/>
            <person name="Alkuraya F.S."/>
        </authorList>
    </citation>
    <scope>VARIANT ALA-48</scope>
</reference>
<reference key="6">
    <citation type="journal article" date="2018" name="Hum. Genet.">
        <title>Correction to: Expanding the genetic heterogeneity of intellectual disability.</title>
        <authorList>
            <person name="Anazi S."/>
            <person name="Maddirevula S."/>
            <person name="Salpietro V."/>
            <person name="Asi Y.T."/>
            <person name="Alsahli S."/>
            <person name="Alhashem A."/>
            <person name="Shamseldin H.E."/>
            <person name="AlZahrani F."/>
            <person name="Patel N."/>
            <person name="Ibrahim N."/>
            <person name="Abdulwahab F.M."/>
            <person name="Hashem M."/>
            <person name="Alhashmi N."/>
            <person name="Al Murshedi F."/>
            <person name="Al Kindy A."/>
            <person name="Alshaer A."/>
            <person name="Rumayyan A."/>
            <person name="Al Tala S."/>
            <person name="Kurdi W."/>
            <person name="Alsaman A."/>
            <person name="Alasmari A."/>
            <person name="Banu S."/>
            <person name="Sultan T."/>
            <person name="Saleh M.M."/>
            <person name="Alkuraya H."/>
            <person name="Salih M.A."/>
            <person name="Aldhalaan H."/>
            <person name="Ben-Omran T."/>
            <person name="Al Musafri F."/>
            <person name="Ali R."/>
            <person name="Suleiman J."/>
            <person name="Tabarki B."/>
            <person name="El-Hattab A.W."/>
            <person name="Bupp C."/>
            <person name="Alfadhel M."/>
            <person name="Al Tassan N."/>
            <person name="Monies D."/>
            <person name="Arold S.T."/>
            <person name="Abouelhoda M."/>
            <person name="Lashley T."/>
            <person name="Houlden H."/>
            <person name="Faqeih E."/>
            <person name="Alkuraya F.S."/>
        </authorList>
    </citation>
    <scope>ERRATUM OF PUBMED:28940097</scope>
</reference>
<accession>O43934</accession>
<accession>O43442</accession>
<accession>Q9NXI5</accession>
<organism>
    <name type="scientific">Homo sapiens</name>
    <name type="common">Human</name>
    <dbReference type="NCBI Taxonomy" id="9606"/>
    <lineage>
        <taxon>Eukaryota</taxon>
        <taxon>Metazoa</taxon>
        <taxon>Chordata</taxon>
        <taxon>Craniata</taxon>
        <taxon>Vertebrata</taxon>
        <taxon>Euteleostomi</taxon>
        <taxon>Mammalia</taxon>
        <taxon>Eutheria</taxon>
        <taxon>Euarchontoglires</taxon>
        <taxon>Primates</taxon>
        <taxon>Haplorrhini</taxon>
        <taxon>Catarrhini</taxon>
        <taxon>Hominidae</taxon>
        <taxon>Homo</taxon>
    </lineage>
</organism>
<gene>
    <name type="primary">MFSD11</name>
    <name type="synonym">ET</name>
</gene>
<dbReference type="EMBL" id="AF015184">
    <property type="protein sequence ID" value="AAB92495.1"/>
    <property type="molecule type" value="mRNA"/>
</dbReference>
<dbReference type="EMBL" id="AF015185">
    <property type="protein sequence ID" value="AAB92496.1"/>
    <property type="molecule type" value="mRNA"/>
</dbReference>
<dbReference type="EMBL" id="AF015186">
    <property type="protein sequence ID" value="AAB92497.1"/>
    <property type="molecule type" value="mRNA"/>
</dbReference>
<dbReference type="EMBL" id="AK000233">
    <property type="protein sequence ID" value="BAA91025.1"/>
    <property type="molecule type" value="mRNA"/>
</dbReference>
<dbReference type="EMBL" id="CH471099">
    <property type="protein sequence ID" value="EAW89449.1"/>
    <property type="molecule type" value="Genomic_DNA"/>
</dbReference>
<dbReference type="EMBL" id="CH471099">
    <property type="protein sequence ID" value="EAW89452.1"/>
    <property type="molecule type" value="Genomic_DNA"/>
</dbReference>
<dbReference type="EMBL" id="BC002753">
    <property type="protein sequence ID" value="AAH02753.1"/>
    <property type="molecule type" value="mRNA"/>
</dbReference>
<dbReference type="EMBL" id="BC062563">
    <property type="protein sequence ID" value="AAH62563.1"/>
    <property type="molecule type" value="mRNA"/>
</dbReference>
<dbReference type="CCDS" id="CCDS11750.1">
    <molecule id="O43934-1"/>
</dbReference>
<dbReference type="CCDS" id="CCDS56045.1">
    <molecule id="O43934-2"/>
</dbReference>
<dbReference type="RefSeq" id="NP_001229461.1">
    <molecule id="O43934-1"/>
    <property type="nucleotide sequence ID" value="NM_001242532.5"/>
</dbReference>
<dbReference type="RefSeq" id="NP_001229462.1">
    <molecule id="O43934-1"/>
    <property type="nucleotide sequence ID" value="NM_001242533.3"/>
</dbReference>
<dbReference type="RefSeq" id="NP_001229463.1">
    <molecule id="O43934-1"/>
    <property type="nucleotide sequence ID" value="NM_001242534.3"/>
</dbReference>
<dbReference type="RefSeq" id="NP_001229464.1">
    <molecule id="O43934-1"/>
    <property type="nucleotide sequence ID" value="NM_001242535.3"/>
</dbReference>
<dbReference type="RefSeq" id="NP_001229465.1">
    <molecule id="O43934-2"/>
    <property type="nucleotide sequence ID" value="NM_001242536.3"/>
</dbReference>
<dbReference type="RefSeq" id="NP_001229466.1">
    <molecule id="O43934-2"/>
    <property type="nucleotide sequence ID" value="NM_001242537.3"/>
</dbReference>
<dbReference type="RefSeq" id="NP_001339946.1">
    <molecule id="O43934-1"/>
    <property type="nucleotide sequence ID" value="NM_001353017.2"/>
</dbReference>
<dbReference type="RefSeq" id="NP_001339947.1">
    <molecule id="O43934-1"/>
    <property type="nucleotide sequence ID" value="NM_001353018.2"/>
</dbReference>
<dbReference type="RefSeq" id="NP_001339948.1">
    <molecule id="O43934-1"/>
    <property type="nucleotide sequence ID" value="NM_001353019.2"/>
</dbReference>
<dbReference type="RefSeq" id="NP_077287.1">
    <molecule id="O43934-1"/>
    <property type="nucleotide sequence ID" value="NM_024311.5"/>
</dbReference>
<dbReference type="RefSeq" id="XP_016880555.1">
    <property type="nucleotide sequence ID" value="XM_017025066.1"/>
</dbReference>
<dbReference type="RefSeq" id="XP_016880556.1">
    <property type="nucleotide sequence ID" value="XM_017025067.1"/>
</dbReference>
<dbReference type="RefSeq" id="XP_054173170.1">
    <molecule id="O43934-1"/>
    <property type="nucleotide sequence ID" value="XM_054317195.1"/>
</dbReference>
<dbReference type="SMR" id="O43934"/>
<dbReference type="BioGRID" id="122575">
    <property type="interactions" value="23"/>
</dbReference>
<dbReference type="FunCoup" id="O43934">
    <property type="interactions" value="59"/>
</dbReference>
<dbReference type="IntAct" id="O43934">
    <property type="interactions" value="18"/>
</dbReference>
<dbReference type="STRING" id="9606.ENSP00000464932"/>
<dbReference type="GlyCosmos" id="O43934">
    <property type="glycosylation" value="1 site, No reported glycans"/>
</dbReference>
<dbReference type="GlyGen" id="O43934">
    <property type="glycosylation" value="1 site"/>
</dbReference>
<dbReference type="iPTMnet" id="O43934"/>
<dbReference type="PhosphoSitePlus" id="O43934"/>
<dbReference type="BioMuta" id="MFSD11"/>
<dbReference type="jPOST" id="O43934"/>
<dbReference type="MassIVE" id="O43934"/>
<dbReference type="PaxDb" id="9606-ENSP00000464932"/>
<dbReference type="PeptideAtlas" id="O43934"/>
<dbReference type="ProteomicsDB" id="49244">
    <molecule id="O43934-1"/>
</dbReference>
<dbReference type="ProteomicsDB" id="49245">
    <molecule id="O43934-2"/>
</dbReference>
<dbReference type="Antibodypedia" id="19710">
    <property type="antibodies" value="45 antibodies from 12 providers"/>
</dbReference>
<dbReference type="DNASU" id="79157"/>
<dbReference type="Ensembl" id="ENST00000336509.8">
    <molecule id="O43934-1"/>
    <property type="protein sequence ID" value="ENSP00000337240.3"/>
    <property type="gene ID" value="ENSG00000092931.12"/>
</dbReference>
<dbReference type="Ensembl" id="ENST00000355954.7">
    <molecule id="O43934-2"/>
    <property type="protein sequence ID" value="ENSP00000348225.3"/>
    <property type="gene ID" value="ENSG00000092931.12"/>
</dbReference>
<dbReference type="Ensembl" id="ENST00000586622.5">
    <molecule id="O43934-1"/>
    <property type="protein sequence ID" value="ENSP00000466613.1"/>
    <property type="gene ID" value="ENSG00000092931.12"/>
</dbReference>
<dbReference type="Ensembl" id="ENST00000588460.6">
    <molecule id="O43934-1"/>
    <property type="protein sequence ID" value="ENSP00000464932.1"/>
    <property type="gene ID" value="ENSG00000092931.12"/>
</dbReference>
<dbReference type="Ensembl" id="ENST00000590514.5">
    <molecule id="O43934-1"/>
    <property type="protein sequence ID" value="ENSP00000468309.1"/>
    <property type="gene ID" value="ENSG00000092931.12"/>
</dbReference>
<dbReference type="Ensembl" id="ENST00000593181.5">
    <molecule id="O43934-2"/>
    <property type="protein sequence ID" value="ENSP00000466782.1"/>
    <property type="gene ID" value="ENSG00000092931.12"/>
</dbReference>
<dbReference type="Ensembl" id="ENST00000621483.4">
    <molecule id="O43934-1"/>
    <property type="protein sequence ID" value="ENSP00000485005.1"/>
    <property type="gene ID" value="ENSG00000092931.12"/>
</dbReference>
<dbReference type="Ensembl" id="ENST00000685175.1">
    <molecule id="O43934-1"/>
    <property type="protein sequence ID" value="ENSP00000508960.1"/>
    <property type="gene ID" value="ENSG00000092931.12"/>
</dbReference>
<dbReference type="GeneID" id="79157"/>
<dbReference type="KEGG" id="hsa:79157"/>
<dbReference type="MANE-Select" id="ENST00000685175.1">
    <property type="protein sequence ID" value="ENSP00000508960.1"/>
    <property type="RefSeq nucleotide sequence ID" value="NM_001242532.5"/>
    <property type="RefSeq protein sequence ID" value="NP_001229461.1"/>
</dbReference>
<dbReference type="UCSC" id="uc002jta.3">
    <molecule id="O43934-1"/>
    <property type="organism name" value="human"/>
</dbReference>
<dbReference type="AGR" id="HGNC:25458"/>
<dbReference type="CTD" id="79157"/>
<dbReference type="DisGeNET" id="79157"/>
<dbReference type="GeneCards" id="MFSD11"/>
<dbReference type="HGNC" id="HGNC:25458">
    <property type="gene designation" value="MFSD11"/>
</dbReference>
<dbReference type="HPA" id="ENSG00000092931">
    <property type="expression patterns" value="Low tissue specificity"/>
</dbReference>
<dbReference type="MalaCards" id="MFSD11"/>
<dbReference type="MIM" id="620346">
    <property type="type" value="gene"/>
</dbReference>
<dbReference type="neXtProt" id="NX_O43934"/>
<dbReference type="OpenTargets" id="ENSG00000092931"/>
<dbReference type="PharmGKB" id="PA162395841"/>
<dbReference type="VEuPathDB" id="HostDB:ENSG00000092931"/>
<dbReference type="eggNOG" id="KOG3098">
    <property type="taxonomic scope" value="Eukaryota"/>
</dbReference>
<dbReference type="GeneTree" id="ENSGT00390000012918"/>
<dbReference type="HOGENOM" id="CLU_025356_2_0_1"/>
<dbReference type="InParanoid" id="O43934"/>
<dbReference type="OMA" id="QFQDKTH"/>
<dbReference type="OrthoDB" id="196103at2759"/>
<dbReference type="PAN-GO" id="O43934">
    <property type="GO annotations" value="0 GO annotations based on evolutionary models"/>
</dbReference>
<dbReference type="PhylomeDB" id="O43934"/>
<dbReference type="PathwayCommons" id="O43934"/>
<dbReference type="SignaLink" id="O43934"/>
<dbReference type="BioGRID-ORCS" id="79157">
    <property type="hits" value="26 hits in 1159 CRISPR screens"/>
</dbReference>
<dbReference type="ChiTaRS" id="MFSD11">
    <property type="organism name" value="human"/>
</dbReference>
<dbReference type="GenomeRNAi" id="79157"/>
<dbReference type="Pharos" id="O43934">
    <property type="development level" value="Tdark"/>
</dbReference>
<dbReference type="PRO" id="PR:O43934"/>
<dbReference type="Proteomes" id="UP000005640">
    <property type="component" value="Chromosome 17"/>
</dbReference>
<dbReference type="RNAct" id="O43934">
    <property type="molecule type" value="protein"/>
</dbReference>
<dbReference type="Bgee" id="ENSG00000092931">
    <property type="expression patterns" value="Expressed in buccal mucosa cell and 168 other cell types or tissues"/>
</dbReference>
<dbReference type="ExpressionAtlas" id="O43934">
    <property type="expression patterns" value="baseline and differential"/>
</dbReference>
<dbReference type="GO" id="GO:0016020">
    <property type="term" value="C:membrane"/>
    <property type="evidence" value="ECO:0007669"/>
    <property type="project" value="UniProtKB-SubCell"/>
</dbReference>
<dbReference type="CDD" id="cd17407">
    <property type="entry name" value="MFS_MFSD11"/>
    <property type="match status" value="1"/>
</dbReference>
<dbReference type="Gene3D" id="1.20.1250.20">
    <property type="entry name" value="MFS general substrate transporter like domains"/>
    <property type="match status" value="2"/>
</dbReference>
<dbReference type="InterPro" id="IPR010291">
    <property type="entry name" value="Ion_channel_UNC-93"/>
</dbReference>
<dbReference type="InterPro" id="IPR036259">
    <property type="entry name" value="MFS_trans_sf"/>
</dbReference>
<dbReference type="InterPro" id="IPR051617">
    <property type="entry name" value="UNC-93-like_regulator"/>
</dbReference>
<dbReference type="PANTHER" id="PTHR23294">
    <property type="entry name" value="ET TRANSLATION PRODUCT-RELATED"/>
    <property type="match status" value="1"/>
</dbReference>
<dbReference type="PANTHER" id="PTHR23294:SF0">
    <property type="entry name" value="UNC93-LIKE PROTEIN MFSD11"/>
    <property type="match status" value="1"/>
</dbReference>
<dbReference type="Pfam" id="PF05978">
    <property type="entry name" value="UNC-93"/>
    <property type="match status" value="1"/>
</dbReference>
<dbReference type="SUPFAM" id="SSF103473">
    <property type="entry name" value="MFS general substrate transporter"/>
    <property type="match status" value="1"/>
</dbReference>
<protein>
    <recommendedName>
        <fullName>UNC93-like protein MFSD11</fullName>
    </recommendedName>
    <alternativeName>
        <fullName>Major facilitator superfamily domain-containing protein 11</fullName>
    </alternativeName>
    <alternativeName>
        <fullName>Protein ET</fullName>
    </alternativeName>
</protein>